<sequence length="249" mass="27755">MVDRLANSEANTRRISIVESCFGAAGQPLTIPGRVLIGEGVLTKLCRKKPKARQFFLFNDILVYGNIVIQKKKYNKQHIIPLENVTIDSIKDEGELRNGWLIKTPTKSFAVYAATATEKSEWMNHINKCVTDLLSKSGKTPSNEHAAVWVPDSEATVCMRCQKAKFTPVNRRHHCRKCGFVVCGPCSEKRFLLPSQSSKPVRICDFCYDLLSTGDMAACQPTRSDSYSQSLKSPLNDASDDDDDDDSSD</sequence>
<reference key="1">
    <citation type="journal article" date="2005" name="Science">
        <title>The transcriptional landscape of the mammalian genome.</title>
        <authorList>
            <person name="Carninci P."/>
            <person name="Kasukawa T."/>
            <person name="Katayama S."/>
            <person name="Gough J."/>
            <person name="Frith M.C."/>
            <person name="Maeda N."/>
            <person name="Oyama R."/>
            <person name="Ravasi T."/>
            <person name="Lenhard B."/>
            <person name="Wells C."/>
            <person name="Kodzius R."/>
            <person name="Shimokawa K."/>
            <person name="Bajic V.B."/>
            <person name="Brenner S.E."/>
            <person name="Batalov S."/>
            <person name="Forrest A.R."/>
            <person name="Zavolan M."/>
            <person name="Davis M.J."/>
            <person name="Wilming L.G."/>
            <person name="Aidinis V."/>
            <person name="Allen J.E."/>
            <person name="Ambesi-Impiombato A."/>
            <person name="Apweiler R."/>
            <person name="Aturaliya R.N."/>
            <person name="Bailey T.L."/>
            <person name="Bansal M."/>
            <person name="Baxter L."/>
            <person name="Beisel K.W."/>
            <person name="Bersano T."/>
            <person name="Bono H."/>
            <person name="Chalk A.M."/>
            <person name="Chiu K.P."/>
            <person name="Choudhary V."/>
            <person name="Christoffels A."/>
            <person name="Clutterbuck D.R."/>
            <person name="Crowe M.L."/>
            <person name="Dalla E."/>
            <person name="Dalrymple B.P."/>
            <person name="de Bono B."/>
            <person name="Della Gatta G."/>
            <person name="di Bernardo D."/>
            <person name="Down T."/>
            <person name="Engstrom P."/>
            <person name="Fagiolini M."/>
            <person name="Faulkner G."/>
            <person name="Fletcher C.F."/>
            <person name="Fukushima T."/>
            <person name="Furuno M."/>
            <person name="Futaki S."/>
            <person name="Gariboldi M."/>
            <person name="Georgii-Hemming P."/>
            <person name="Gingeras T.R."/>
            <person name="Gojobori T."/>
            <person name="Green R.E."/>
            <person name="Gustincich S."/>
            <person name="Harbers M."/>
            <person name="Hayashi Y."/>
            <person name="Hensch T.K."/>
            <person name="Hirokawa N."/>
            <person name="Hill D."/>
            <person name="Huminiecki L."/>
            <person name="Iacono M."/>
            <person name="Ikeo K."/>
            <person name="Iwama A."/>
            <person name="Ishikawa T."/>
            <person name="Jakt M."/>
            <person name="Kanapin A."/>
            <person name="Katoh M."/>
            <person name="Kawasawa Y."/>
            <person name="Kelso J."/>
            <person name="Kitamura H."/>
            <person name="Kitano H."/>
            <person name="Kollias G."/>
            <person name="Krishnan S.P."/>
            <person name="Kruger A."/>
            <person name="Kummerfeld S.K."/>
            <person name="Kurochkin I.V."/>
            <person name="Lareau L.F."/>
            <person name="Lazarevic D."/>
            <person name="Lipovich L."/>
            <person name="Liu J."/>
            <person name="Liuni S."/>
            <person name="McWilliam S."/>
            <person name="Madan Babu M."/>
            <person name="Madera M."/>
            <person name="Marchionni L."/>
            <person name="Matsuda H."/>
            <person name="Matsuzawa S."/>
            <person name="Miki H."/>
            <person name="Mignone F."/>
            <person name="Miyake S."/>
            <person name="Morris K."/>
            <person name="Mottagui-Tabar S."/>
            <person name="Mulder N."/>
            <person name="Nakano N."/>
            <person name="Nakauchi H."/>
            <person name="Ng P."/>
            <person name="Nilsson R."/>
            <person name="Nishiguchi S."/>
            <person name="Nishikawa S."/>
            <person name="Nori F."/>
            <person name="Ohara O."/>
            <person name="Okazaki Y."/>
            <person name="Orlando V."/>
            <person name="Pang K.C."/>
            <person name="Pavan W.J."/>
            <person name="Pavesi G."/>
            <person name="Pesole G."/>
            <person name="Petrovsky N."/>
            <person name="Piazza S."/>
            <person name="Reed J."/>
            <person name="Reid J.F."/>
            <person name="Ring B.Z."/>
            <person name="Ringwald M."/>
            <person name="Rost B."/>
            <person name="Ruan Y."/>
            <person name="Salzberg S.L."/>
            <person name="Sandelin A."/>
            <person name="Schneider C."/>
            <person name="Schoenbach C."/>
            <person name="Sekiguchi K."/>
            <person name="Semple C.A."/>
            <person name="Seno S."/>
            <person name="Sessa L."/>
            <person name="Sheng Y."/>
            <person name="Shibata Y."/>
            <person name="Shimada H."/>
            <person name="Shimada K."/>
            <person name="Silva D."/>
            <person name="Sinclair B."/>
            <person name="Sperling S."/>
            <person name="Stupka E."/>
            <person name="Sugiura K."/>
            <person name="Sultana R."/>
            <person name="Takenaka Y."/>
            <person name="Taki K."/>
            <person name="Tammoja K."/>
            <person name="Tan S.L."/>
            <person name="Tang S."/>
            <person name="Taylor M.S."/>
            <person name="Tegner J."/>
            <person name="Teichmann S.A."/>
            <person name="Ueda H.R."/>
            <person name="van Nimwegen E."/>
            <person name="Verardo R."/>
            <person name="Wei C.L."/>
            <person name="Yagi K."/>
            <person name="Yamanishi H."/>
            <person name="Zabarovsky E."/>
            <person name="Zhu S."/>
            <person name="Zimmer A."/>
            <person name="Hide W."/>
            <person name="Bult C."/>
            <person name="Grimmond S.M."/>
            <person name="Teasdale R.D."/>
            <person name="Liu E.T."/>
            <person name="Brusic V."/>
            <person name="Quackenbush J."/>
            <person name="Wahlestedt C."/>
            <person name="Mattick J.S."/>
            <person name="Hume D.A."/>
            <person name="Kai C."/>
            <person name="Sasaki D."/>
            <person name="Tomaru Y."/>
            <person name="Fukuda S."/>
            <person name="Kanamori-Katayama M."/>
            <person name="Suzuki M."/>
            <person name="Aoki J."/>
            <person name="Arakawa T."/>
            <person name="Iida J."/>
            <person name="Imamura K."/>
            <person name="Itoh M."/>
            <person name="Kato T."/>
            <person name="Kawaji H."/>
            <person name="Kawagashira N."/>
            <person name="Kawashima T."/>
            <person name="Kojima M."/>
            <person name="Kondo S."/>
            <person name="Konno H."/>
            <person name="Nakano K."/>
            <person name="Ninomiya N."/>
            <person name="Nishio T."/>
            <person name="Okada M."/>
            <person name="Plessy C."/>
            <person name="Shibata K."/>
            <person name="Shiraki T."/>
            <person name="Suzuki S."/>
            <person name="Tagami M."/>
            <person name="Waki K."/>
            <person name="Watahiki A."/>
            <person name="Okamura-Oho Y."/>
            <person name="Suzuki H."/>
            <person name="Kawai J."/>
            <person name="Hayashizaki Y."/>
        </authorList>
    </citation>
    <scope>NUCLEOTIDE SEQUENCE [LARGE SCALE MRNA]</scope>
    <source>
        <strain>C57BL/6J</strain>
        <tissue>Cecum</tissue>
    </source>
</reference>
<reference key="2">
    <citation type="journal article" date="2004" name="Genome Res.">
        <title>The status, quality, and expansion of the NIH full-length cDNA project: the Mammalian Gene Collection (MGC).</title>
        <authorList>
            <consortium name="The MGC Project Team"/>
        </authorList>
    </citation>
    <scope>NUCLEOTIDE SEQUENCE [LARGE SCALE MRNA]</scope>
    <source>
        <strain>FVB/N</strain>
        <tissue>Colon</tissue>
        <tissue>Eye</tissue>
    </source>
</reference>
<reference key="3">
    <citation type="journal article" date="2008" name="J. Mol. Med.">
        <title>EAPF/Phafin-2, a novel endoplasmic reticulum-associated protein, facilitates TNF-alpha-triggered cellular apoptosis through endoplasmic reticulum-mitochondrial apoptotic pathway.</title>
        <authorList>
            <person name="Li C."/>
            <person name="Liu Q."/>
            <person name="Li N."/>
            <person name="Chen W."/>
            <person name="Wang L."/>
            <person name="Wang Y."/>
            <person name="Yu Y."/>
            <person name="Cao X."/>
        </authorList>
    </citation>
    <scope>FUNCTION</scope>
    <scope>TISSUE SPECIFICITY</scope>
    <scope>INDUCTION</scope>
</reference>
<reference key="4">
    <citation type="journal article" date="2009" name="Immunity">
        <title>The phagosomal proteome in interferon-gamma-activated macrophages.</title>
        <authorList>
            <person name="Trost M."/>
            <person name="English L."/>
            <person name="Lemieux S."/>
            <person name="Courcelles M."/>
            <person name="Desjardins M."/>
            <person name="Thibault P."/>
        </authorList>
    </citation>
    <scope>PHOSPHORYLATION [LARGE SCALE ANALYSIS] AT SER-239 AND SER-248</scope>
    <scope>IDENTIFICATION BY MASS SPECTROMETRY [LARGE SCALE ANALYSIS]</scope>
</reference>
<reference key="5">
    <citation type="journal article" date="2010" name="Cell">
        <title>A tissue-specific atlas of mouse protein phosphorylation and expression.</title>
        <authorList>
            <person name="Huttlin E.L."/>
            <person name="Jedrychowski M.P."/>
            <person name="Elias J.E."/>
            <person name="Goswami T."/>
            <person name="Rad R."/>
            <person name="Beausoleil S.A."/>
            <person name="Villen J."/>
            <person name="Haas W."/>
            <person name="Sowa M.E."/>
            <person name="Gygi S.P."/>
        </authorList>
    </citation>
    <scope>PHOSPHORYLATION [LARGE SCALE ANALYSIS] AT SER-16; SER-239 AND SER-248</scope>
    <scope>IDENTIFICATION BY MASS SPECTROMETRY [LARGE SCALE ANALYSIS]</scope>
    <source>
        <tissue>Brain</tissue>
        <tissue>Brown adipose tissue</tissue>
        <tissue>Heart</tissue>
        <tissue>Kidney</tissue>
        <tissue>Lung</tissue>
        <tissue>Spleen</tissue>
        <tissue>Testis</tissue>
    </source>
</reference>
<organism>
    <name type="scientific">Mus musculus</name>
    <name type="common">Mouse</name>
    <dbReference type="NCBI Taxonomy" id="10090"/>
    <lineage>
        <taxon>Eukaryota</taxon>
        <taxon>Metazoa</taxon>
        <taxon>Chordata</taxon>
        <taxon>Craniata</taxon>
        <taxon>Vertebrata</taxon>
        <taxon>Euteleostomi</taxon>
        <taxon>Mammalia</taxon>
        <taxon>Eutheria</taxon>
        <taxon>Euarchontoglires</taxon>
        <taxon>Glires</taxon>
        <taxon>Rodentia</taxon>
        <taxon>Myomorpha</taxon>
        <taxon>Muroidea</taxon>
        <taxon>Muridae</taxon>
        <taxon>Murinae</taxon>
        <taxon>Mus</taxon>
        <taxon>Mus</taxon>
    </lineage>
</organism>
<proteinExistence type="evidence at protein level"/>
<accession>Q91WB4</accession>
<name>PKHF2_MOUSE</name>
<evidence type="ECO:0000250" key="1"/>
<evidence type="ECO:0000250" key="2">
    <source>
        <dbReference type="UniProtKB" id="Q9H8W4"/>
    </source>
</evidence>
<evidence type="ECO:0000255" key="3">
    <source>
        <dbReference type="PROSITE-ProRule" id="PRU00091"/>
    </source>
</evidence>
<evidence type="ECO:0000255" key="4">
    <source>
        <dbReference type="PROSITE-ProRule" id="PRU00145"/>
    </source>
</evidence>
<evidence type="ECO:0000256" key="5">
    <source>
        <dbReference type="SAM" id="MobiDB-lite"/>
    </source>
</evidence>
<evidence type="ECO:0000269" key="6">
    <source>
    </source>
</evidence>
<evidence type="ECO:0007744" key="7">
    <source>
    </source>
</evidence>
<evidence type="ECO:0007744" key="8">
    <source>
    </source>
</evidence>
<protein>
    <recommendedName>
        <fullName>Pleckstrin homology domain-containing family F member 2</fullName>
        <shortName>PH domain-containing family F member 2</shortName>
    </recommendedName>
</protein>
<dbReference type="EMBL" id="AK033666">
    <property type="protein sequence ID" value="BAC28417.1"/>
    <property type="molecule type" value="mRNA"/>
</dbReference>
<dbReference type="EMBL" id="AK154634">
    <property type="protein sequence ID" value="BAE32730.1"/>
    <property type="molecule type" value="mRNA"/>
</dbReference>
<dbReference type="EMBL" id="BC016134">
    <property type="protein sequence ID" value="AAH16134.1"/>
    <property type="molecule type" value="mRNA"/>
</dbReference>
<dbReference type="EMBL" id="BC039276">
    <property type="protein sequence ID" value="AAH39276.1"/>
    <property type="molecule type" value="mRNA"/>
</dbReference>
<dbReference type="CCDS" id="CCDS17962.1"/>
<dbReference type="RefSeq" id="NP_780384.1">
    <property type="nucleotide sequence ID" value="NM_175175.4"/>
</dbReference>
<dbReference type="SMR" id="Q91WB4"/>
<dbReference type="BioGRID" id="214938">
    <property type="interactions" value="4"/>
</dbReference>
<dbReference type="FunCoup" id="Q91WB4">
    <property type="interactions" value="1786"/>
</dbReference>
<dbReference type="STRING" id="10090.ENSMUSP00000054745"/>
<dbReference type="iPTMnet" id="Q91WB4"/>
<dbReference type="PhosphoSitePlus" id="Q91WB4"/>
<dbReference type="SwissPalm" id="Q91WB4"/>
<dbReference type="jPOST" id="Q91WB4"/>
<dbReference type="PaxDb" id="10090-ENSMUSP00000054745"/>
<dbReference type="PeptideAtlas" id="Q91WB4"/>
<dbReference type="ProteomicsDB" id="288221"/>
<dbReference type="Pumba" id="Q91WB4"/>
<dbReference type="Antibodypedia" id="25937">
    <property type="antibodies" value="116 antibodies from 21 providers"/>
</dbReference>
<dbReference type="Ensembl" id="ENSMUST00000054776.4">
    <property type="protein sequence ID" value="ENSMUSP00000054745.4"/>
    <property type="gene ID" value="ENSMUSG00000049969.4"/>
</dbReference>
<dbReference type="GeneID" id="71801"/>
<dbReference type="KEGG" id="mmu:71801"/>
<dbReference type="UCSC" id="uc008ryw.2">
    <property type="organism name" value="mouse"/>
</dbReference>
<dbReference type="AGR" id="MGI:1919051"/>
<dbReference type="CTD" id="79666"/>
<dbReference type="MGI" id="MGI:1919051">
    <property type="gene designation" value="Plekhf2"/>
</dbReference>
<dbReference type="VEuPathDB" id="HostDB:ENSMUSG00000049969"/>
<dbReference type="eggNOG" id="KOG1729">
    <property type="taxonomic scope" value="Eukaryota"/>
</dbReference>
<dbReference type="GeneTree" id="ENSGT00940000156408"/>
<dbReference type="HOGENOM" id="CLU_064864_1_0_1"/>
<dbReference type="InParanoid" id="Q91WB4"/>
<dbReference type="OMA" id="PVRVCEH"/>
<dbReference type="OrthoDB" id="70570at2759"/>
<dbReference type="PhylomeDB" id="Q91WB4"/>
<dbReference type="TreeFam" id="TF315235"/>
<dbReference type="BioGRID-ORCS" id="71801">
    <property type="hits" value="3 hits in 78 CRISPR screens"/>
</dbReference>
<dbReference type="ChiTaRS" id="Plekhf2">
    <property type="organism name" value="mouse"/>
</dbReference>
<dbReference type="PRO" id="PR:Q91WB4"/>
<dbReference type="Proteomes" id="UP000000589">
    <property type="component" value="Chromosome 4"/>
</dbReference>
<dbReference type="RNAct" id="Q91WB4">
    <property type="molecule type" value="protein"/>
</dbReference>
<dbReference type="Bgee" id="ENSMUSG00000049969">
    <property type="expression patterns" value="Expressed in granulocyte and 175 other cell types or tissues"/>
</dbReference>
<dbReference type="ExpressionAtlas" id="Q91WB4">
    <property type="expression patterns" value="baseline and differential"/>
</dbReference>
<dbReference type="GO" id="GO:0031901">
    <property type="term" value="C:early endosome membrane"/>
    <property type="evidence" value="ECO:0007669"/>
    <property type="project" value="UniProtKB-SubCell"/>
</dbReference>
<dbReference type="GO" id="GO:0005783">
    <property type="term" value="C:endoplasmic reticulum"/>
    <property type="evidence" value="ECO:0007669"/>
    <property type="project" value="UniProtKB-SubCell"/>
</dbReference>
<dbReference type="GO" id="GO:0030133">
    <property type="term" value="C:transport vesicle"/>
    <property type="evidence" value="ECO:0007669"/>
    <property type="project" value="Ensembl"/>
</dbReference>
<dbReference type="GO" id="GO:0008270">
    <property type="term" value="F:zinc ion binding"/>
    <property type="evidence" value="ECO:0007669"/>
    <property type="project" value="UniProtKB-KW"/>
</dbReference>
<dbReference type="GO" id="GO:0015031">
    <property type="term" value="P:protein transport"/>
    <property type="evidence" value="ECO:0007669"/>
    <property type="project" value="UniProtKB-KW"/>
</dbReference>
<dbReference type="CDD" id="cd15755">
    <property type="entry name" value="FYVE_PKHF2"/>
    <property type="match status" value="1"/>
</dbReference>
<dbReference type="CDD" id="cd01218">
    <property type="entry name" value="PH_Phafin2-like"/>
    <property type="match status" value="1"/>
</dbReference>
<dbReference type="FunFam" id="2.30.29.30:FF:000167">
    <property type="entry name" value="Pleckstrin homology domain-containing family F member 2"/>
    <property type="match status" value="1"/>
</dbReference>
<dbReference type="FunFam" id="3.30.40.10:FF:000212">
    <property type="entry name" value="pleckstrin homology domain-containing family F member 2"/>
    <property type="match status" value="1"/>
</dbReference>
<dbReference type="Gene3D" id="2.30.29.30">
    <property type="entry name" value="Pleckstrin-homology domain (PH domain)/Phosphotyrosine-binding domain (PTB)"/>
    <property type="match status" value="1"/>
</dbReference>
<dbReference type="Gene3D" id="3.30.40.10">
    <property type="entry name" value="Zinc/RING finger domain, C3HC4 (zinc finger)"/>
    <property type="match status" value="1"/>
</dbReference>
<dbReference type="InterPro" id="IPR011993">
    <property type="entry name" value="PH-like_dom_sf"/>
</dbReference>
<dbReference type="InterPro" id="IPR001849">
    <property type="entry name" value="PH_domain"/>
</dbReference>
<dbReference type="InterPro" id="IPR051765">
    <property type="entry name" value="PH_domain-containing_F"/>
</dbReference>
<dbReference type="InterPro" id="IPR037871">
    <property type="entry name" value="PH_Phafin"/>
</dbReference>
<dbReference type="InterPro" id="IPR047966">
    <property type="entry name" value="PLEKHF2_FYVE"/>
</dbReference>
<dbReference type="InterPro" id="IPR000306">
    <property type="entry name" value="Znf_FYVE"/>
</dbReference>
<dbReference type="InterPro" id="IPR017455">
    <property type="entry name" value="Znf_FYVE-rel"/>
</dbReference>
<dbReference type="InterPro" id="IPR011011">
    <property type="entry name" value="Znf_FYVE_PHD"/>
</dbReference>
<dbReference type="InterPro" id="IPR013083">
    <property type="entry name" value="Znf_RING/FYVE/PHD"/>
</dbReference>
<dbReference type="PANTHER" id="PTHR46280:SF1">
    <property type="entry name" value="PLECKSTRIN HOMOLOGY DOMAIN-CONTAINING FAMILY F MEMBER 2"/>
    <property type="match status" value="1"/>
</dbReference>
<dbReference type="PANTHER" id="PTHR46280">
    <property type="entry name" value="PLECKSTRIN HOMOLOGY DOMAIN-CONTAINING FAMILY F MEMBER 2-RELATED"/>
    <property type="match status" value="1"/>
</dbReference>
<dbReference type="Pfam" id="PF01363">
    <property type="entry name" value="FYVE"/>
    <property type="match status" value="1"/>
</dbReference>
<dbReference type="Pfam" id="PF00169">
    <property type="entry name" value="PH"/>
    <property type="match status" value="1"/>
</dbReference>
<dbReference type="SMART" id="SM00064">
    <property type="entry name" value="FYVE"/>
    <property type="match status" value="1"/>
</dbReference>
<dbReference type="SMART" id="SM00233">
    <property type="entry name" value="PH"/>
    <property type="match status" value="1"/>
</dbReference>
<dbReference type="SUPFAM" id="SSF57903">
    <property type="entry name" value="FYVE/PHD zinc finger"/>
    <property type="match status" value="1"/>
</dbReference>
<dbReference type="SUPFAM" id="SSF50729">
    <property type="entry name" value="PH domain-like"/>
    <property type="match status" value="1"/>
</dbReference>
<dbReference type="PROSITE" id="PS50003">
    <property type="entry name" value="PH_DOMAIN"/>
    <property type="match status" value="1"/>
</dbReference>
<dbReference type="PROSITE" id="PS50178">
    <property type="entry name" value="ZF_FYVE"/>
    <property type="match status" value="1"/>
</dbReference>
<gene>
    <name type="primary">Plekhf2</name>
</gene>
<feature type="chain" id="PRO_0000251601" description="Pleckstrin homology domain-containing family F member 2">
    <location>
        <begin position="1"/>
        <end position="249"/>
    </location>
</feature>
<feature type="domain" description="PH" evidence="4">
    <location>
        <begin position="35"/>
        <end position="131"/>
    </location>
</feature>
<feature type="zinc finger region" description="FYVE-type" evidence="3">
    <location>
        <begin position="152"/>
        <end position="212"/>
    </location>
</feature>
<feature type="region of interest" description="Disordered" evidence="5">
    <location>
        <begin position="221"/>
        <end position="249"/>
    </location>
</feature>
<feature type="compositionally biased region" description="Polar residues" evidence="5">
    <location>
        <begin position="221"/>
        <end position="233"/>
    </location>
</feature>
<feature type="compositionally biased region" description="Acidic residues" evidence="5">
    <location>
        <begin position="238"/>
        <end position="249"/>
    </location>
</feature>
<feature type="binding site" evidence="3">
    <location>
        <position position="158"/>
    </location>
    <ligand>
        <name>Zn(2+)</name>
        <dbReference type="ChEBI" id="CHEBI:29105"/>
        <label>1</label>
    </ligand>
</feature>
<feature type="binding site" evidence="3">
    <location>
        <position position="161"/>
    </location>
    <ligand>
        <name>Zn(2+)</name>
        <dbReference type="ChEBI" id="CHEBI:29105"/>
        <label>1</label>
    </ligand>
</feature>
<feature type="binding site" evidence="3">
    <location>
        <position position="175"/>
    </location>
    <ligand>
        <name>Zn(2+)</name>
        <dbReference type="ChEBI" id="CHEBI:29105"/>
        <label>2</label>
    </ligand>
</feature>
<feature type="binding site" evidence="3">
    <location>
        <position position="178"/>
    </location>
    <ligand>
        <name>Zn(2+)</name>
        <dbReference type="ChEBI" id="CHEBI:29105"/>
        <label>2</label>
    </ligand>
</feature>
<feature type="binding site" evidence="3">
    <location>
        <position position="183"/>
    </location>
    <ligand>
        <name>Zn(2+)</name>
        <dbReference type="ChEBI" id="CHEBI:29105"/>
        <label>1</label>
    </ligand>
</feature>
<feature type="binding site" evidence="3">
    <location>
        <position position="186"/>
    </location>
    <ligand>
        <name>Zn(2+)</name>
        <dbReference type="ChEBI" id="CHEBI:29105"/>
        <label>1</label>
    </ligand>
</feature>
<feature type="binding site" evidence="3">
    <location>
        <position position="204"/>
    </location>
    <ligand>
        <name>Zn(2+)</name>
        <dbReference type="ChEBI" id="CHEBI:29105"/>
        <label>2</label>
    </ligand>
</feature>
<feature type="binding site" evidence="3">
    <location>
        <position position="207"/>
    </location>
    <ligand>
        <name>Zn(2+)</name>
        <dbReference type="ChEBI" id="CHEBI:29105"/>
        <label>2</label>
    </ligand>
</feature>
<feature type="modified residue" description="Phosphoserine" evidence="8">
    <location>
        <position position="16"/>
    </location>
</feature>
<feature type="modified residue" description="N6-acetyllysine" evidence="2">
    <location>
        <position position="44"/>
    </location>
</feature>
<feature type="modified residue" description="Phosphoserine" evidence="7 8">
    <location>
        <position position="239"/>
    </location>
</feature>
<feature type="modified residue" description="Phosphoserine" evidence="7 8">
    <location>
        <position position="248"/>
    </location>
</feature>
<keyword id="KW-0007">Acetylation</keyword>
<keyword id="KW-0256">Endoplasmic reticulum</keyword>
<keyword id="KW-0967">Endosome</keyword>
<keyword id="KW-0472">Membrane</keyword>
<keyword id="KW-0479">Metal-binding</keyword>
<keyword id="KW-0597">Phosphoprotein</keyword>
<keyword id="KW-0653">Protein transport</keyword>
<keyword id="KW-1185">Reference proteome</keyword>
<keyword id="KW-0813">Transport</keyword>
<keyword id="KW-0862">Zinc</keyword>
<keyword id="KW-0863">Zinc-finger</keyword>
<comment type="function">
    <text evidence="1 6">May play a role in early endosome fusion upstream of RAB5, hence regulating receptor trafficking and fluid-phase transport (By similarity). Enhances cellular sensitivity to TNF-induced apoptosis.</text>
</comment>
<comment type="subunit">
    <text evidence="1">May interact with EEA1.</text>
</comment>
<comment type="subcellular location">
    <subcellularLocation>
        <location evidence="2">Early endosome membrane</location>
        <topology evidence="2">Peripheral membrane protein</topology>
    </subcellularLocation>
    <subcellularLocation>
        <location evidence="2">Endoplasmic reticulum</location>
    </subcellularLocation>
    <text evidence="2">Colocalizes with EEA1 and RAB5 at endosomal membrane fusion hot spots. May translocate to the endoplasmic reticulum in the early phase of apoptosis.</text>
</comment>
<comment type="tissue specificity">
    <text evidence="6">Expressed in brain, stomach and thymus, as well as in kidney, spleen, and skeletal muscle. Also expressed in peripheral blood mononuclear cells and dendritic cells.</text>
</comment>
<comment type="induction">
    <text evidence="6">Up-regulated by TNF, bacterial lipopolysaccharides (LPS) and phorbol myristate acetate (PMA) (at protein level).</text>
</comment>
<comment type="domain">
    <text evidence="1">The PH and FYVE domains may be important for TNF-induced localization to the endoplasmic reticulum and for enhanced cellular sensitivity to TNF-induced apoptosis. The FYVE domain is important for binding to the endosomal membrane (By similarity).</text>
</comment>